<reference key="1">
    <citation type="journal article" date="1988" name="Gene">
        <title>Cloning and sequencing of the gene encoding the phosphatidylcholine-preferring phospholipase C of Bacillus cereus.</title>
        <authorList>
            <person name="Johansen T."/>
            <person name="Holm T."/>
            <person name="Guddal P.H."/>
            <person name="Sletten K."/>
            <person name="Haugli F.B."/>
            <person name="Little C."/>
        </authorList>
    </citation>
    <scope>NUCLEOTIDE SEQUENCE [GENOMIC DNA]</scope>
    <source>
        <strain>SE-1</strain>
    </source>
</reference>
<reference key="2">
    <citation type="journal article" date="1993" name="Bioorg. Khim.">
        <title>Nucleotide sequence of phospholipase C and sphingomyelinase genes from Bacillus cereus BKM-B164.</title>
        <authorList>
            <person name="Kuzmin N.P."/>
            <person name="Gavrilenko I.V."/>
            <person name="Krukov V.M."/>
            <person name="Karpov A.V."/>
        </authorList>
    </citation>
    <scope>NUCLEOTIDE SEQUENCE [GENOMIC DNA]</scope>
    <source>
        <strain>VKM B-164</strain>
    </source>
</reference>
<reference key="3">
    <citation type="journal article" date="1988" name="Eur. J. Biochem.">
        <title>Nucleotide sequence and expression in Escherichia coli of the gene coding for sphingomyelinase of Bacillus cereus.</title>
        <authorList>
            <person name="Yamada A."/>
            <person name="Tsukagoshi N."/>
            <person name="Udaka S."/>
            <person name="Sasaki T."/>
            <person name="Makino S."/>
            <person name="Nakamura S."/>
            <person name="Little C."/>
            <person name="Tomita M."/>
            <person name="Ikezawa H."/>
        </authorList>
    </citation>
    <scope>NUCLEOTIDE SEQUENCE [GENOMIC DNA] OF 166-283</scope>
    <source>
        <strain>IAM 1208</strain>
    </source>
</reference>
<reference key="4">
    <citation type="journal article" date="1977" name="Eur. J. Biochem.">
        <title>Some characteristics of phospholipase C from Bacillus cereus.</title>
        <authorList>
            <person name="Otnaess A.-B."/>
            <person name="Little C."/>
            <person name="Sletten K."/>
            <person name="Wallin R."/>
            <person name="Johnsen S."/>
            <person name="Flengsrud R."/>
            <person name="Prydz H."/>
        </authorList>
    </citation>
    <scope>PROTEIN SEQUENCE OF 39-65</scope>
</reference>
<reference key="5">
    <citation type="journal article" date="1991" name="J. Biochem.">
        <title>Kinetics of the hydrolysis of monodispersed and micellar phosphatidylcholines catalyzed by a phospholipase C from Bacillus cereus.</title>
        <authorList>
            <person name="Ikeda K."/>
            <person name="Inoue S."/>
            <person name="Amasaki C."/>
            <person name="Teshima K."/>
            <person name="Ikezawa H."/>
        </authorList>
    </citation>
    <scope>PROTEIN SEQUENCE OF 39-49</scope>
    <source>
        <strain>IAM 1208</strain>
    </source>
</reference>
<reference key="6">
    <citation type="journal article" date="1989" name="Nature">
        <title>High-resolution (1.5 A) crystal structure of phospholipase C from Bacillus cereus.</title>
        <authorList>
            <person name="Hough E."/>
            <person name="Hansen L.K."/>
            <person name="Birknes B."/>
            <person name="Jynge K."/>
            <person name="Hansen S."/>
            <person name="Hordvik A."/>
            <person name="Little C."/>
            <person name="Dodson E."/>
            <person name="Derewenda Z."/>
        </authorList>
    </citation>
    <scope>X-RAY CRYSTALLOGRAPHY (1.5 ANGSTROMS)</scope>
</reference>
<name>PHLC_BACCE</name>
<sequence>MKKKVLALAAAITVVAPLQSVAFAHENDGGSKIKIVHRWSAEDKHKEGVNSHLWIVNRAIDIMSRNTTLVKQDRVAQLNEWRTELENGIYAADYENPYYDNSTFASHFYDPDNGKTYIPFAKQAKETGAKYFKLAGESYKNKDMKQAFFYLGLSLHYLGDVNQPMHAANFTNLSYPQGFHSKYENFVDTIKDNYKVTDGNGYWNWKGTNPEEWIHGAAVVAKQDYSGIVNDNTKDWFVKAAVSQEYADKWRAEVTPMTGKRLMDAQRVTAGYIQLWFDTYGDR</sequence>
<protein>
    <recommendedName>
        <fullName>Phospholipase C</fullName>
        <shortName>PLC</shortName>
        <ecNumber>3.1.4.3</ecNumber>
    </recommendedName>
    <alternativeName>
        <fullName>Cereolysin A</fullName>
    </alternativeName>
    <alternativeName>
        <fullName>Phosphatidylcholine cholinephosphohydrolase</fullName>
    </alternativeName>
</protein>
<proteinExistence type="evidence at protein level"/>
<evidence type="ECO:0000255" key="1"/>
<evidence type="ECO:0000255" key="2">
    <source>
        <dbReference type="PROSITE-ProRule" id="PRU00678"/>
    </source>
</evidence>
<evidence type="ECO:0000269" key="3">
    <source>
    </source>
</evidence>
<evidence type="ECO:0000269" key="4">
    <source>
    </source>
</evidence>
<evidence type="ECO:0007829" key="5">
    <source>
        <dbReference type="PDB" id="1AH7"/>
    </source>
</evidence>
<keyword id="KW-0002">3D-structure</keyword>
<keyword id="KW-0204">Cytolysis</keyword>
<keyword id="KW-0903">Direct protein sequencing</keyword>
<keyword id="KW-0354">Hemolysis</keyword>
<keyword id="KW-0378">Hydrolase</keyword>
<keyword id="KW-0479">Metal-binding</keyword>
<keyword id="KW-0732">Signal</keyword>
<keyword id="KW-0862">Zinc</keyword>
<keyword id="KW-0865">Zymogen</keyword>
<feature type="signal peptide" evidence="1">
    <location>
        <begin position="1"/>
        <end position="24"/>
    </location>
</feature>
<feature type="propeptide" id="PRO_0000023927" evidence="3 4">
    <location>
        <begin position="25"/>
        <end position="38"/>
    </location>
</feature>
<feature type="chain" id="PRO_0000023928" description="Phospholipase C">
    <location>
        <begin position="39"/>
        <end position="283"/>
    </location>
</feature>
<feature type="domain" description="Zn-dependent PLC" evidence="2">
    <location>
        <begin position="39"/>
        <end position="283"/>
    </location>
</feature>
<feature type="binding site">
    <location>
        <position position="39"/>
    </location>
    <ligand>
        <name>Zn(2+)</name>
        <dbReference type="ChEBI" id="CHEBI:29105"/>
        <label>3</label>
    </ligand>
</feature>
<feature type="binding site">
    <location>
        <position position="52"/>
    </location>
    <ligand>
        <name>Zn(2+)</name>
        <dbReference type="ChEBI" id="CHEBI:29105"/>
        <label>3</label>
    </ligand>
</feature>
<feature type="binding site">
    <location>
        <position position="93"/>
    </location>
    <ligand>
        <name>Zn(2+)</name>
        <dbReference type="ChEBI" id="CHEBI:29105"/>
        <label>1</label>
    </ligand>
</feature>
<feature type="binding site">
    <location>
        <position position="107"/>
    </location>
    <ligand>
        <name>Zn(2+)</name>
        <dbReference type="ChEBI" id="CHEBI:29105"/>
        <label>1</label>
    </ligand>
</feature>
<feature type="binding site">
    <location>
        <position position="156"/>
    </location>
    <ligand>
        <name>Zn(2+)</name>
        <dbReference type="ChEBI" id="CHEBI:29105"/>
        <label>1</label>
    </ligand>
</feature>
<feature type="binding site">
    <location>
        <position position="160"/>
    </location>
    <ligand>
        <name>Zn(2+)</name>
        <dbReference type="ChEBI" id="CHEBI:29105"/>
        <label>1</label>
    </ligand>
</feature>
<feature type="binding site">
    <location>
        <position position="160"/>
    </location>
    <ligand>
        <name>Zn(2+)</name>
        <dbReference type="ChEBI" id="CHEBI:29105"/>
        <label>3</label>
    </ligand>
</feature>
<feature type="binding site">
    <location>
        <position position="166"/>
    </location>
    <ligand>
        <name>Zn(2+)</name>
        <dbReference type="ChEBI" id="CHEBI:29105"/>
        <label>2</label>
    </ligand>
</feature>
<feature type="binding site">
    <location>
        <position position="180"/>
    </location>
    <ligand>
        <name>Zn(2+)</name>
        <dbReference type="ChEBI" id="CHEBI:29105"/>
        <label>2</label>
    </ligand>
</feature>
<feature type="binding site">
    <location>
        <position position="184"/>
    </location>
    <ligand>
        <name>Zn(2+)</name>
        <dbReference type="ChEBI" id="CHEBI:29105"/>
        <label>2</label>
    </ligand>
</feature>
<feature type="sequence variant" description="In strain: IAM 1208.">
    <original>E</original>
    <variation>D</variation>
    <location>
        <position position="212"/>
    </location>
</feature>
<feature type="sequence variant" description="In strain: IAM 1208.">
    <original>S</original>
    <variation>A</variation>
    <location>
        <position position="226"/>
    </location>
</feature>
<feature type="sequence variant" description="In strain: IAM 1208.">
    <original>K</original>
    <variation>R</variation>
    <location>
        <position position="239"/>
    </location>
</feature>
<feature type="sequence variant" description="In strain: IAM 1208.">
    <original>D</original>
    <variation>N</variation>
    <location>
        <position position="282"/>
    </location>
</feature>
<feature type="strand" evidence="5">
    <location>
        <begin position="43"/>
        <end position="45"/>
    </location>
</feature>
<feature type="helix" evidence="5">
    <location>
        <begin position="47"/>
        <end position="49"/>
    </location>
</feature>
<feature type="helix" evidence="5">
    <location>
        <begin position="51"/>
        <end position="65"/>
    </location>
</feature>
<feature type="helix" evidence="5">
    <location>
        <begin position="72"/>
        <end position="80"/>
    </location>
</feature>
<feature type="helix" evidence="5">
    <location>
        <begin position="82"/>
        <end position="91"/>
    </location>
</feature>
<feature type="turn" evidence="5">
    <location>
        <begin position="92"/>
        <end position="94"/>
    </location>
</feature>
<feature type="turn" evidence="5">
    <location>
        <begin position="96"/>
        <end position="103"/>
    </location>
</feature>
<feature type="helix" evidence="5">
    <location>
        <begin position="105"/>
        <end position="107"/>
    </location>
</feature>
<feature type="turn" evidence="5">
    <location>
        <begin position="111"/>
        <end position="113"/>
    </location>
</feature>
<feature type="helix" evidence="5">
    <location>
        <begin position="124"/>
        <end position="140"/>
    </location>
</feature>
<feature type="helix" evidence="5">
    <location>
        <begin position="144"/>
        <end position="161"/>
    </location>
</feature>
<feature type="turn" evidence="5">
    <location>
        <begin position="164"/>
        <end position="169"/>
    </location>
</feature>
<feature type="strand" evidence="5">
    <location>
        <begin position="174"/>
        <end position="176"/>
    </location>
</feature>
<feature type="helix" evidence="5">
    <location>
        <begin position="179"/>
        <end position="190"/>
    </location>
</feature>
<feature type="helix" evidence="5">
    <location>
        <begin position="191"/>
        <end position="194"/>
    </location>
</feature>
<feature type="helix" evidence="5">
    <location>
        <begin position="210"/>
        <end position="223"/>
    </location>
</feature>
<feature type="helix" evidence="5">
    <location>
        <begin position="225"/>
        <end position="227"/>
    </location>
</feature>
<feature type="helix" evidence="5">
    <location>
        <begin position="231"/>
        <end position="240"/>
    </location>
</feature>
<feature type="helix" evidence="5">
    <location>
        <begin position="244"/>
        <end position="280"/>
    </location>
</feature>
<organism>
    <name type="scientific">Bacillus cereus</name>
    <dbReference type="NCBI Taxonomy" id="1396"/>
    <lineage>
        <taxon>Bacteria</taxon>
        <taxon>Bacillati</taxon>
        <taxon>Bacillota</taxon>
        <taxon>Bacilli</taxon>
        <taxon>Bacillales</taxon>
        <taxon>Bacillaceae</taxon>
        <taxon>Bacillus</taxon>
        <taxon>Bacillus cereus group</taxon>
    </lineage>
</organism>
<accession>P09598</accession>
<dbReference type="EC" id="3.1.4.3"/>
<dbReference type="EMBL" id="X64141">
    <property type="protein sequence ID" value="CAA45502.1"/>
    <property type="molecule type" value="Genomic_DNA"/>
</dbReference>
<dbReference type="EMBL" id="X12854">
    <property type="protein sequence ID" value="CAA31332.1"/>
    <property type="molecule type" value="Genomic_DNA"/>
</dbReference>
<dbReference type="EMBL" id="X12711">
    <property type="protein sequence ID" value="CAA31213.1"/>
    <property type="molecule type" value="Genomic_DNA"/>
</dbReference>
<dbReference type="EMBL" id="X64140">
    <property type="protein sequence ID" value="CAA45501.1"/>
    <property type="status" value="ALT_TERM"/>
    <property type="molecule type" value="Genomic_DNA"/>
</dbReference>
<dbReference type="PIR" id="S18978">
    <property type="entry name" value="PS0197"/>
</dbReference>
<dbReference type="PDB" id="1AH7">
    <property type="method" value="X-ray"/>
    <property type="resolution" value="1.50 A"/>
    <property type="chains" value="A=39-283"/>
</dbReference>
<dbReference type="PDB" id="1P5X">
    <property type="method" value="X-ray"/>
    <property type="resolution" value="2.00 A"/>
    <property type="chains" value="A=39-283"/>
</dbReference>
<dbReference type="PDB" id="1P6D">
    <property type="method" value="X-ray"/>
    <property type="resolution" value="2.00 A"/>
    <property type="chains" value="A=39-283"/>
</dbReference>
<dbReference type="PDB" id="1P6E">
    <property type="method" value="X-ray"/>
    <property type="resolution" value="2.30 A"/>
    <property type="chains" value="A=39-283"/>
</dbReference>
<dbReference type="PDB" id="2FFZ">
    <property type="method" value="X-ray"/>
    <property type="resolution" value="2.05 A"/>
    <property type="chains" value="A=39-283"/>
</dbReference>
<dbReference type="PDB" id="2FGN">
    <property type="method" value="X-ray"/>
    <property type="resolution" value="2.04 A"/>
    <property type="chains" value="A=39-283"/>
</dbReference>
<dbReference type="PDB" id="2HUC">
    <property type="method" value="X-ray"/>
    <property type="resolution" value="1.90 A"/>
    <property type="chains" value="A=39-283"/>
</dbReference>
<dbReference type="PDBsum" id="1AH7"/>
<dbReference type="PDBsum" id="1P5X"/>
<dbReference type="PDBsum" id="1P6D"/>
<dbReference type="PDBsum" id="1P6E"/>
<dbReference type="PDBsum" id="2FFZ"/>
<dbReference type="PDBsum" id="2FGN"/>
<dbReference type="PDBsum" id="2HUC"/>
<dbReference type="SMR" id="P09598"/>
<dbReference type="BindingDB" id="P09598"/>
<dbReference type="ChEMBL" id="CHEMBL1293202"/>
<dbReference type="DrugBank" id="DB03827">
    <property type="generic name" value="(3s)-3,4-Di-N-Hexanoyloxybutyl-1-Phosphocholine"/>
</dbReference>
<dbReference type="DrugBank" id="DB02225">
    <property type="generic name" value="1,2-Di-N-Pentanoyl-Sn-Glycero-3-Dithiophosphocholine"/>
</dbReference>
<dbReference type="eggNOG" id="ENOG5030A2K">
    <property type="taxonomic scope" value="Bacteria"/>
</dbReference>
<dbReference type="OMA" id="KANACCD"/>
<dbReference type="BRENDA" id="3.1.4.3">
    <property type="organism ID" value="648"/>
</dbReference>
<dbReference type="SABIO-RK" id="P09598"/>
<dbReference type="EvolutionaryTrace" id="P09598"/>
<dbReference type="GO" id="GO:0034480">
    <property type="term" value="F:phosphatidylcholine phospholipase C activity"/>
    <property type="evidence" value="ECO:0007669"/>
    <property type="project" value="UniProtKB-EC"/>
</dbReference>
<dbReference type="GO" id="GO:0008270">
    <property type="term" value="F:zinc ion binding"/>
    <property type="evidence" value="ECO:0007669"/>
    <property type="project" value="InterPro"/>
</dbReference>
<dbReference type="GO" id="GO:0031640">
    <property type="term" value="P:killing of cells of another organism"/>
    <property type="evidence" value="ECO:0007669"/>
    <property type="project" value="UniProtKB-KW"/>
</dbReference>
<dbReference type="CDD" id="cd11009">
    <property type="entry name" value="Zn_dep_PLPC"/>
    <property type="match status" value="1"/>
</dbReference>
<dbReference type="FunFam" id="1.10.575.10:FF:000001">
    <property type="entry name" value="Phospholipase C"/>
    <property type="match status" value="1"/>
</dbReference>
<dbReference type="Gene3D" id="1.10.575.10">
    <property type="entry name" value="P1 Nuclease"/>
    <property type="match status" value="1"/>
</dbReference>
<dbReference type="InterPro" id="IPR008947">
    <property type="entry name" value="PLipase_C/P1_nuclease_dom_sf"/>
</dbReference>
<dbReference type="InterPro" id="IPR029002">
    <property type="entry name" value="PLPC/GPLD1"/>
</dbReference>
<dbReference type="InterPro" id="IPR001531">
    <property type="entry name" value="Zn_PLipaseC"/>
</dbReference>
<dbReference type="Pfam" id="PF00882">
    <property type="entry name" value="Zn_dep_PLPC"/>
    <property type="match status" value="1"/>
</dbReference>
<dbReference type="PRINTS" id="PR00479">
    <property type="entry name" value="PRPHPHLPASEC"/>
</dbReference>
<dbReference type="SMART" id="SM00770">
    <property type="entry name" value="Zn_dep_PLPC"/>
    <property type="match status" value="1"/>
</dbReference>
<dbReference type="SUPFAM" id="SSF48537">
    <property type="entry name" value="Phospholipase C/P1 nuclease"/>
    <property type="match status" value="1"/>
</dbReference>
<dbReference type="PROSITE" id="PS00384">
    <property type="entry name" value="PROKAR_ZN_DEPEND_PLPC_1"/>
    <property type="match status" value="1"/>
</dbReference>
<dbReference type="PROSITE" id="PS51346">
    <property type="entry name" value="PROKAR_ZN_DEPEND_PLPC_2"/>
    <property type="match status" value="1"/>
</dbReference>
<gene>
    <name type="primary">plc</name>
</gene>
<comment type="function">
    <text>Required, with sphingomyelinase, to effect target cell lysis (hemolysis).</text>
</comment>
<comment type="catalytic activity">
    <reaction>
        <text>a 1,2-diacyl-sn-glycero-3-phosphocholine + H2O = phosphocholine + a 1,2-diacyl-sn-glycerol + H(+)</text>
        <dbReference type="Rhea" id="RHEA:10604"/>
        <dbReference type="ChEBI" id="CHEBI:15377"/>
        <dbReference type="ChEBI" id="CHEBI:15378"/>
        <dbReference type="ChEBI" id="CHEBI:17815"/>
        <dbReference type="ChEBI" id="CHEBI:57643"/>
        <dbReference type="ChEBI" id="CHEBI:295975"/>
        <dbReference type="EC" id="3.1.4.3"/>
    </reaction>
</comment>
<comment type="cofactor">
    <cofactor>
        <name>Zn(2+)</name>
        <dbReference type="ChEBI" id="CHEBI:29105"/>
    </cofactor>
    <text>Binds 3 Zn(2+) ions per subunit.</text>
</comment>
<comment type="subunit">
    <text>Monomer.</text>
</comment>
<comment type="similarity">
    <text evidence="2">Belongs to the bacterial zinc-metallophospholipase C family.</text>
</comment>